<keyword id="KW-0963">Cytoplasm</keyword>
<keyword id="KW-0456">Lyase</keyword>
<keyword id="KW-1185">Reference proteome</keyword>
<keyword id="KW-0816">Tricarboxylic acid cycle</keyword>
<name>FUMC_HALSA</name>
<evidence type="ECO:0000255" key="1">
    <source>
        <dbReference type="HAMAP-Rule" id="MF_00743"/>
    </source>
</evidence>
<reference key="1">
    <citation type="journal article" date="2000" name="Proc. Natl. Acad. Sci. U.S.A.">
        <title>Genome sequence of Halobacterium species NRC-1.</title>
        <authorList>
            <person name="Ng W.V."/>
            <person name="Kennedy S.P."/>
            <person name="Mahairas G.G."/>
            <person name="Berquist B."/>
            <person name="Pan M."/>
            <person name="Shukla H.D."/>
            <person name="Lasky S.R."/>
            <person name="Baliga N.S."/>
            <person name="Thorsson V."/>
            <person name="Sbrogna J."/>
            <person name="Swartzell S."/>
            <person name="Weir D."/>
            <person name="Hall J."/>
            <person name="Dahl T.A."/>
            <person name="Welti R."/>
            <person name="Goo Y.A."/>
            <person name="Leithauser B."/>
            <person name="Keller K."/>
            <person name="Cruz R."/>
            <person name="Danson M.J."/>
            <person name="Hough D.W."/>
            <person name="Maddocks D.G."/>
            <person name="Jablonski P.E."/>
            <person name="Krebs M.P."/>
            <person name="Angevine C.M."/>
            <person name="Dale H."/>
            <person name="Isenbarger T.A."/>
            <person name="Peck R.F."/>
            <person name="Pohlschroder M."/>
            <person name="Spudich J.L."/>
            <person name="Jung K.-H."/>
            <person name="Alam M."/>
            <person name="Freitas T."/>
            <person name="Hou S."/>
            <person name="Daniels C.J."/>
            <person name="Dennis P.P."/>
            <person name="Omer A.D."/>
            <person name="Ebhardt H."/>
            <person name="Lowe T.M."/>
            <person name="Liang P."/>
            <person name="Riley M."/>
            <person name="Hood L."/>
            <person name="DasSarma S."/>
        </authorList>
    </citation>
    <scope>NUCLEOTIDE SEQUENCE [LARGE SCALE GENOMIC DNA]</scope>
    <source>
        <strain>ATCC 700922 / JCM 11081 / NRC-1</strain>
    </source>
</reference>
<organism>
    <name type="scientific">Halobacterium salinarum (strain ATCC 700922 / JCM 11081 / NRC-1)</name>
    <name type="common">Halobacterium halobium</name>
    <dbReference type="NCBI Taxonomy" id="64091"/>
    <lineage>
        <taxon>Archaea</taxon>
        <taxon>Methanobacteriati</taxon>
        <taxon>Methanobacteriota</taxon>
        <taxon>Stenosarchaea group</taxon>
        <taxon>Halobacteria</taxon>
        <taxon>Halobacteriales</taxon>
        <taxon>Halobacteriaceae</taxon>
        <taxon>Halobacterium</taxon>
        <taxon>Halobacterium salinarum NRC-34001</taxon>
    </lineage>
</organism>
<accession>Q9HQ29</accession>
<feature type="chain" id="PRO_0000161332" description="Fumarate hydratase class II">
    <location>
        <begin position="1"/>
        <end position="470"/>
    </location>
</feature>
<feature type="active site" description="Proton donor/acceptor" evidence="1">
    <location>
        <position position="188"/>
    </location>
</feature>
<feature type="active site" evidence="1">
    <location>
        <position position="318"/>
    </location>
</feature>
<feature type="binding site" evidence="1">
    <location>
        <begin position="99"/>
        <end position="101"/>
    </location>
    <ligand>
        <name>substrate</name>
    </ligand>
</feature>
<feature type="binding site" description="in site B" evidence="1">
    <location>
        <begin position="129"/>
        <end position="132"/>
    </location>
    <ligand>
        <name>substrate</name>
    </ligand>
</feature>
<feature type="binding site" evidence="1">
    <location>
        <begin position="139"/>
        <end position="141"/>
    </location>
    <ligand>
        <name>substrate</name>
    </ligand>
</feature>
<feature type="binding site" evidence="1">
    <location>
        <position position="187"/>
    </location>
    <ligand>
        <name>substrate</name>
    </ligand>
</feature>
<feature type="binding site" evidence="1">
    <location>
        <position position="319"/>
    </location>
    <ligand>
        <name>substrate</name>
    </ligand>
</feature>
<feature type="binding site" evidence="1">
    <location>
        <begin position="324"/>
        <end position="326"/>
    </location>
    <ligand>
        <name>substrate</name>
    </ligand>
</feature>
<feature type="site" description="Important for catalytic activity" evidence="1">
    <location>
        <position position="331"/>
    </location>
</feature>
<comment type="function">
    <text evidence="1">Involved in the TCA cycle. Catalyzes the stereospecific interconversion of fumarate to L-malate.</text>
</comment>
<comment type="catalytic activity">
    <reaction evidence="1">
        <text>(S)-malate = fumarate + H2O</text>
        <dbReference type="Rhea" id="RHEA:12460"/>
        <dbReference type="ChEBI" id="CHEBI:15377"/>
        <dbReference type="ChEBI" id="CHEBI:15589"/>
        <dbReference type="ChEBI" id="CHEBI:29806"/>
        <dbReference type="EC" id="4.2.1.2"/>
    </reaction>
</comment>
<comment type="pathway">
    <text evidence="1">Carbohydrate metabolism; tricarboxylic acid cycle; (S)-malate from fumarate: step 1/1.</text>
</comment>
<comment type="subunit">
    <text evidence="1">Homotetramer.</text>
</comment>
<comment type="subcellular location">
    <subcellularLocation>
        <location evidence="1">Cytoplasm</location>
    </subcellularLocation>
</comment>
<comment type="miscellaneous">
    <text evidence="1">There are 2 substrate-binding sites: the catalytic A site, and the non-catalytic B site that may play a role in the transfer of substrate or product between the active site and the solvent. Alternatively, the B site may bind allosteric effectors.</text>
</comment>
<comment type="similarity">
    <text evidence="1">Belongs to the class-II fumarase/aspartase family. Fumarase subfamily.</text>
</comment>
<protein>
    <recommendedName>
        <fullName evidence="1">Fumarate hydratase class II</fullName>
        <shortName evidence="1">Fumarase C</shortName>
        <ecNumber evidence="1">4.2.1.2</ecNumber>
    </recommendedName>
    <alternativeName>
        <fullName evidence="1">Aerobic fumarase</fullName>
    </alternativeName>
    <alternativeName>
        <fullName evidence="1">Iron-independent fumarase</fullName>
    </alternativeName>
</protein>
<sequence>MSEDYRTEQDSLGEMQVPADAYWGAQTQRAIENFPISGIAFGRRFVRALGVVKKAAAQANRDLGLVDDERADAIVAAADEVIAGEHDDQFPVDVFQTGSGTSSNMNANEVIANRAAELLGEEIGDRVVHPNDHVNYGQSSNDVIPTAMHVASLDALVNDVKPGLETLAAELDDKADAFDGVVKTGRTHLQDATPVRLGQEFGGYRTQVEKGIDRIEAVAPRLSELALGGTAVGTGLNTHPEFPETAAGYISEETGVTFREADNHFEAQAAHDAMNEAHGALRTVAGSLNKIANDLRLLASGPRNGLGEIEQPENQPGSSIMPGKINPVVAEAVNQVHKQVVGNDAAIAAGAAEGQIDLNLYKPVLAHNFLQSADMLANASAAFGEKFVAKLEANEAACEAQVERSMALATALNPTIGYDKASEVAKAALKEGKTVTEVVVEKGYLSEAEAADVLDPEGMTHRGILSGDDT</sequence>
<gene>
    <name evidence="1" type="primary">fumC</name>
    <name type="ordered locus">VNG_1356G</name>
</gene>
<dbReference type="EC" id="4.2.1.2" evidence="1"/>
<dbReference type="EMBL" id="AE004437">
    <property type="protein sequence ID" value="AAG19688.1"/>
    <property type="molecule type" value="Genomic_DNA"/>
</dbReference>
<dbReference type="PIR" id="D84290">
    <property type="entry name" value="D84290"/>
</dbReference>
<dbReference type="RefSeq" id="WP_010902984.1">
    <property type="nucleotide sequence ID" value="NC_002607.1"/>
</dbReference>
<dbReference type="SMR" id="Q9HQ29"/>
<dbReference type="STRING" id="64091.VNG_1356G"/>
<dbReference type="PaxDb" id="64091-VNG_1356G"/>
<dbReference type="KEGG" id="hal:VNG_1356G"/>
<dbReference type="PATRIC" id="fig|64091.14.peg.1036"/>
<dbReference type="HOGENOM" id="CLU_021594_4_1_2"/>
<dbReference type="InParanoid" id="Q9HQ29"/>
<dbReference type="OrthoDB" id="26319at2157"/>
<dbReference type="PhylomeDB" id="Q9HQ29"/>
<dbReference type="UniPathway" id="UPA00223">
    <property type="reaction ID" value="UER01007"/>
</dbReference>
<dbReference type="Proteomes" id="UP000000554">
    <property type="component" value="Chromosome"/>
</dbReference>
<dbReference type="GO" id="GO:0005737">
    <property type="term" value="C:cytoplasm"/>
    <property type="evidence" value="ECO:0007669"/>
    <property type="project" value="UniProtKB-SubCell"/>
</dbReference>
<dbReference type="GO" id="GO:0004333">
    <property type="term" value="F:fumarate hydratase activity"/>
    <property type="evidence" value="ECO:0007669"/>
    <property type="project" value="UniProtKB-UniRule"/>
</dbReference>
<dbReference type="GO" id="GO:0006106">
    <property type="term" value="P:fumarate metabolic process"/>
    <property type="evidence" value="ECO:0007669"/>
    <property type="project" value="InterPro"/>
</dbReference>
<dbReference type="GO" id="GO:0006099">
    <property type="term" value="P:tricarboxylic acid cycle"/>
    <property type="evidence" value="ECO:0007669"/>
    <property type="project" value="UniProtKB-UniRule"/>
</dbReference>
<dbReference type="CDD" id="cd01362">
    <property type="entry name" value="Fumarase_classII"/>
    <property type="match status" value="1"/>
</dbReference>
<dbReference type="FunFam" id="1.10.40.30:FF:000002">
    <property type="entry name" value="Fumarate hydratase class II"/>
    <property type="match status" value="1"/>
</dbReference>
<dbReference type="FunFam" id="1.10.275.10:FF:000001">
    <property type="entry name" value="Fumarate hydratase, mitochondrial"/>
    <property type="match status" value="1"/>
</dbReference>
<dbReference type="FunFam" id="1.20.200.10:FF:000001">
    <property type="entry name" value="Fumarate hydratase, mitochondrial"/>
    <property type="match status" value="1"/>
</dbReference>
<dbReference type="Gene3D" id="1.10.40.30">
    <property type="entry name" value="Fumarase/aspartase (C-terminal domain)"/>
    <property type="match status" value="1"/>
</dbReference>
<dbReference type="Gene3D" id="1.20.200.10">
    <property type="entry name" value="Fumarase/aspartase (Central domain)"/>
    <property type="match status" value="1"/>
</dbReference>
<dbReference type="Gene3D" id="1.10.275.10">
    <property type="entry name" value="Fumarase/aspartase (N-terminal domain)"/>
    <property type="match status" value="1"/>
</dbReference>
<dbReference type="HAMAP" id="MF_00743">
    <property type="entry name" value="FumaraseC"/>
    <property type="match status" value="1"/>
</dbReference>
<dbReference type="InterPro" id="IPR005677">
    <property type="entry name" value="Fum_hydII"/>
</dbReference>
<dbReference type="InterPro" id="IPR024083">
    <property type="entry name" value="Fumarase/histidase_N"/>
</dbReference>
<dbReference type="InterPro" id="IPR018951">
    <property type="entry name" value="Fumarase_C_C"/>
</dbReference>
<dbReference type="InterPro" id="IPR020557">
    <property type="entry name" value="Fumarate_lyase_CS"/>
</dbReference>
<dbReference type="InterPro" id="IPR000362">
    <property type="entry name" value="Fumarate_lyase_fam"/>
</dbReference>
<dbReference type="InterPro" id="IPR022761">
    <property type="entry name" value="Fumarate_lyase_N"/>
</dbReference>
<dbReference type="InterPro" id="IPR008948">
    <property type="entry name" value="L-Aspartase-like"/>
</dbReference>
<dbReference type="NCBIfam" id="NF008909">
    <property type="entry name" value="PRK12273.1"/>
    <property type="match status" value="1"/>
</dbReference>
<dbReference type="PANTHER" id="PTHR11444">
    <property type="entry name" value="ASPARTATEAMMONIA/ARGININOSUCCINATE/ADENYLOSUCCINATE LYASE"/>
    <property type="match status" value="1"/>
</dbReference>
<dbReference type="PANTHER" id="PTHR11444:SF22">
    <property type="entry name" value="FUMARATE HYDRATASE CLASS II"/>
    <property type="match status" value="1"/>
</dbReference>
<dbReference type="Pfam" id="PF10415">
    <property type="entry name" value="FumaraseC_C"/>
    <property type="match status" value="1"/>
</dbReference>
<dbReference type="Pfam" id="PF00206">
    <property type="entry name" value="Lyase_1"/>
    <property type="match status" value="1"/>
</dbReference>
<dbReference type="PRINTS" id="PR00145">
    <property type="entry name" value="ARGSUCLYASE"/>
</dbReference>
<dbReference type="PRINTS" id="PR00149">
    <property type="entry name" value="FUMRATELYASE"/>
</dbReference>
<dbReference type="SUPFAM" id="SSF48557">
    <property type="entry name" value="L-aspartase-like"/>
    <property type="match status" value="1"/>
</dbReference>
<dbReference type="PROSITE" id="PS00163">
    <property type="entry name" value="FUMARATE_LYASES"/>
    <property type="match status" value="1"/>
</dbReference>
<proteinExistence type="inferred from homology"/>